<evidence type="ECO:0000255" key="1">
    <source>
        <dbReference type="HAMAP-Rule" id="MF_00116"/>
    </source>
</evidence>
<protein>
    <recommendedName>
        <fullName evidence="1">Deoxyuridine 5'-triphosphate nucleotidohydrolase</fullName>
        <shortName evidence="1">dUTPase</shortName>
        <ecNumber evidence="1">3.6.1.23</ecNumber>
    </recommendedName>
    <alternativeName>
        <fullName evidence="1">dUTP pyrophosphatase</fullName>
    </alternativeName>
</protein>
<comment type="function">
    <text evidence="1">This enzyme is involved in nucleotide metabolism: it produces dUMP, the immediate precursor of thymidine nucleotides and it decreases the intracellular concentration of dUTP so that uracil cannot be incorporated into DNA.</text>
</comment>
<comment type="catalytic activity">
    <reaction evidence="1">
        <text>dUTP + H2O = dUMP + diphosphate + H(+)</text>
        <dbReference type="Rhea" id="RHEA:10248"/>
        <dbReference type="ChEBI" id="CHEBI:15377"/>
        <dbReference type="ChEBI" id="CHEBI:15378"/>
        <dbReference type="ChEBI" id="CHEBI:33019"/>
        <dbReference type="ChEBI" id="CHEBI:61555"/>
        <dbReference type="ChEBI" id="CHEBI:246422"/>
        <dbReference type="EC" id="3.6.1.23"/>
    </reaction>
</comment>
<comment type="cofactor">
    <cofactor evidence="1">
        <name>Mg(2+)</name>
        <dbReference type="ChEBI" id="CHEBI:18420"/>
    </cofactor>
</comment>
<comment type="pathway">
    <text evidence="1">Pyrimidine metabolism; dUMP biosynthesis; dUMP from dCTP (dUTP route): step 2/2.</text>
</comment>
<comment type="similarity">
    <text evidence="1">Belongs to the dUTPase family.</text>
</comment>
<organism>
    <name type="scientific">Ectopseudomonas mendocina (strain ymp)</name>
    <name type="common">Pseudomonas mendocina</name>
    <dbReference type="NCBI Taxonomy" id="399739"/>
    <lineage>
        <taxon>Bacteria</taxon>
        <taxon>Pseudomonadati</taxon>
        <taxon>Pseudomonadota</taxon>
        <taxon>Gammaproteobacteria</taxon>
        <taxon>Pseudomonadales</taxon>
        <taxon>Pseudomonadaceae</taxon>
        <taxon>Ectopseudomonas</taxon>
    </lineage>
</organism>
<gene>
    <name evidence="1" type="primary">dut</name>
    <name type="ordered locus">Pmen_4378</name>
</gene>
<reference key="1">
    <citation type="submission" date="2007-04" db="EMBL/GenBank/DDBJ databases">
        <title>Complete sequence of Pseudomonas mendocina ymp.</title>
        <authorList>
            <consortium name="US DOE Joint Genome Institute"/>
            <person name="Copeland A."/>
            <person name="Lucas S."/>
            <person name="Lapidus A."/>
            <person name="Barry K."/>
            <person name="Glavina del Rio T."/>
            <person name="Dalin E."/>
            <person name="Tice H."/>
            <person name="Pitluck S."/>
            <person name="Kiss H."/>
            <person name="Brettin T."/>
            <person name="Detter J.C."/>
            <person name="Bruce D."/>
            <person name="Han C."/>
            <person name="Schmutz J."/>
            <person name="Larimer F."/>
            <person name="Land M."/>
            <person name="Hauser L."/>
            <person name="Kyrpides N."/>
            <person name="Mikhailova N."/>
            <person name="Hersman L."/>
            <person name="Dubois J."/>
            <person name="Maurice P."/>
            <person name="Richardson P."/>
        </authorList>
    </citation>
    <scope>NUCLEOTIDE SEQUENCE [LARGE SCALE GENOMIC DNA]</scope>
    <source>
        <strain>ymp</strain>
    </source>
</reference>
<sequence length="151" mass="16169">MHALQAKILDPRLGQEFPLPQYATPGSAGLDLRAMLKEDIVLEPGQTVLIPTGLSIYIGDPGLAAMILPRSGLGHKHGIVLGNLVGLIDSDYQGELMVSCWNRGHTPFTIAIGERIAQLVLVPVVQAHFELVEQFDETQRGAGGFGHSGSH</sequence>
<dbReference type="EC" id="3.6.1.23" evidence="1"/>
<dbReference type="EMBL" id="CP000680">
    <property type="protein sequence ID" value="ABP87125.1"/>
    <property type="molecule type" value="Genomic_DNA"/>
</dbReference>
<dbReference type="SMR" id="A4Y0K9"/>
<dbReference type="STRING" id="399739.Pmen_4378"/>
<dbReference type="KEGG" id="pmy:Pmen_4378"/>
<dbReference type="PATRIC" id="fig|399739.8.peg.4436"/>
<dbReference type="eggNOG" id="COG0756">
    <property type="taxonomic scope" value="Bacteria"/>
</dbReference>
<dbReference type="HOGENOM" id="CLU_068508_1_1_6"/>
<dbReference type="OrthoDB" id="9809956at2"/>
<dbReference type="UniPathway" id="UPA00610">
    <property type="reaction ID" value="UER00666"/>
</dbReference>
<dbReference type="GO" id="GO:0004170">
    <property type="term" value="F:dUTP diphosphatase activity"/>
    <property type="evidence" value="ECO:0007669"/>
    <property type="project" value="UniProtKB-UniRule"/>
</dbReference>
<dbReference type="GO" id="GO:0000287">
    <property type="term" value="F:magnesium ion binding"/>
    <property type="evidence" value="ECO:0007669"/>
    <property type="project" value="UniProtKB-UniRule"/>
</dbReference>
<dbReference type="GO" id="GO:0006226">
    <property type="term" value="P:dUMP biosynthetic process"/>
    <property type="evidence" value="ECO:0007669"/>
    <property type="project" value="UniProtKB-UniRule"/>
</dbReference>
<dbReference type="GO" id="GO:0046081">
    <property type="term" value="P:dUTP catabolic process"/>
    <property type="evidence" value="ECO:0007669"/>
    <property type="project" value="InterPro"/>
</dbReference>
<dbReference type="CDD" id="cd07557">
    <property type="entry name" value="trimeric_dUTPase"/>
    <property type="match status" value="1"/>
</dbReference>
<dbReference type="FunFam" id="2.70.40.10:FF:000002">
    <property type="entry name" value="dUTP diphosphatase"/>
    <property type="match status" value="1"/>
</dbReference>
<dbReference type="Gene3D" id="2.70.40.10">
    <property type="match status" value="1"/>
</dbReference>
<dbReference type="HAMAP" id="MF_00116">
    <property type="entry name" value="dUTPase_bact"/>
    <property type="match status" value="1"/>
</dbReference>
<dbReference type="InterPro" id="IPR008181">
    <property type="entry name" value="dUTPase"/>
</dbReference>
<dbReference type="InterPro" id="IPR029054">
    <property type="entry name" value="dUTPase-like"/>
</dbReference>
<dbReference type="InterPro" id="IPR036157">
    <property type="entry name" value="dUTPase-like_sf"/>
</dbReference>
<dbReference type="InterPro" id="IPR033704">
    <property type="entry name" value="dUTPase_trimeric"/>
</dbReference>
<dbReference type="NCBIfam" id="TIGR00576">
    <property type="entry name" value="dut"/>
    <property type="match status" value="1"/>
</dbReference>
<dbReference type="NCBIfam" id="NF001862">
    <property type="entry name" value="PRK00601.1"/>
    <property type="match status" value="1"/>
</dbReference>
<dbReference type="PANTHER" id="PTHR11241">
    <property type="entry name" value="DEOXYURIDINE 5'-TRIPHOSPHATE NUCLEOTIDOHYDROLASE"/>
    <property type="match status" value="1"/>
</dbReference>
<dbReference type="PANTHER" id="PTHR11241:SF0">
    <property type="entry name" value="DEOXYURIDINE 5'-TRIPHOSPHATE NUCLEOTIDOHYDROLASE"/>
    <property type="match status" value="1"/>
</dbReference>
<dbReference type="Pfam" id="PF00692">
    <property type="entry name" value="dUTPase"/>
    <property type="match status" value="1"/>
</dbReference>
<dbReference type="SUPFAM" id="SSF51283">
    <property type="entry name" value="dUTPase-like"/>
    <property type="match status" value="1"/>
</dbReference>
<name>DUT_ECTM1</name>
<keyword id="KW-0378">Hydrolase</keyword>
<keyword id="KW-0460">Magnesium</keyword>
<keyword id="KW-0479">Metal-binding</keyword>
<keyword id="KW-0546">Nucleotide metabolism</keyword>
<accession>A4Y0K9</accession>
<feature type="chain" id="PRO_1000015496" description="Deoxyuridine 5'-triphosphate nucleotidohydrolase">
    <location>
        <begin position="1"/>
        <end position="151"/>
    </location>
</feature>
<feature type="binding site" evidence="1">
    <location>
        <begin position="70"/>
        <end position="72"/>
    </location>
    <ligand>
        <name>substrate</name>
    </ligand>
</feature>
<feature type="binding site" evidence="1">
    <location>
        <position position="83"/>
    </location>
    <ligand>
        <name>substrate</name>
    </ligand>
</feature>
<feature type="binding site" evidence="1">
    <location>
        <begin position="87"/>
        <end position="89"/>
    </location>
    <ligand>
        <name>substrate</name>
    </ligand>
</feature>
<feature type="binding site" evidence="1">
    <location>
        <position position="97"/>
    </location>
    <ligand>
        <name>substrate</name>
    </ligand>
</feature>
<proteinExistence type="inferred from homology"/>